<feature type="chain" id="PRO_1000142212" description="Large ribosomal subunit protein uL4">
    <location>
        <begin position="1"/>
        <end position="201"/>
    </location>
</feature>
<feature type="region of interest" description="Disordered" evidence="2">
    <location>
        <begin position="45"/>
        <end position="73"/>
    </location>
</feature>
<organism>
    <name type="scientific">Yersinia pestis bv. Antiqua (strain Angola)</name>
    <dbReference type="NCBI Taxonomy" id="349746"/>
    <lineage>
        <taxon>Bacteria</taxon>
        <taxon>Pseudomonadati</taxon>
        <taxon>Pseudomonadota</taxon>
        <taxon>Gammaproteobacteria</taxon>
        <taxon>Enterobacterales</taxon>
        <taxon>Yersiniaceae</taxon>
        <taxon>Yersinia</taxon>
    </lineage>
</organism>
<dbReference type="EMBL" id="CP000901">
    <property type="protein sequence ID" value="ABX85212.1"/>
    <property type="molecule type" value="Genomic_DNA"/>
</dbReference>
<dbReference type="RefSeq" id="WP_002218934.1">
    <property type="nucleotide sequence ID" value="NZ_CP009935.1"/>
</dbReference>
<dbReference type="SMR" id="A9R8Z7"/>
<dbReference type="GeneID" id="96663195"/>
<dbReference type="KEGG" id="ypg:YpAngola_A0585"/>
<dbReference type="PATRIC" id="fig|349746.12.peg.1534"/>
<dbReference type="GO" id="GO:1990904">
    <property type="term" value="C:ribonucleoprotein complex"/>
    <property type="evidence" value="ECO:0007669"/>
    <property type="project" value="UniProtKB-KW"/>
</dbReference>
<dbReference type="GO" id="GO:0005840">
    <property type="term" value="C:ribosome"/>
    <property type="evidence" value="ECO:0007669"/>
    <property type="project" value="UniProtKB-KW"/>
</dbReference>
<dbReference type="GO" id="GO:0019843">
    <property type="term" value="F:rRNA binding"/>
    <property type="evidence" value="ECO:0007669"/>
    <property type="project" value="UniProtKB-UniRule"/>
</dbReference>
<dbReference type="GO" id="GO:0003735">
    <property type="term" value="F:structural constituent of ribosome"/>
    <property type="evidence" value="ECO:0007669"/>
    <property type="project" value="InterPro"/>
</dbReference>
<dbReference type="GO" id="GO:0006412">
    <property type="term" value="P:translation"/>
    <property type="evidence" value="ECO:0007669"/>
    <property type="project" value="UniProtKB-UniRule"/>
</dbReference>
<dbReference type="FunFam" id="3.40.1370.10:FF:000001">
    <property type="entry name" value="50S ribosomal protein L4"/>
    <property type="match status" value="1"/>
</dbReference>
<dbReference type="Gene3D" id="3.40.1370.10">
    <property type="match status" value="1"/>
</dbReference>
<dbReference type="HAMAP" id="MF_01328_B">
    <property type="entry name" value="Ribosomal_uL4_B"/>
    <property type="match status" value="1"/>
</dbReference>
<dbReference type="InterPro" id="IPR002136">
    <property type="entry name" value="Ribosomal_uL4"/>
</dbReference>
<dbReference type="InterPro" id="IPR013005">
    <property type="entry name" value="Ribosomal_uL4-like"/>
</dbReference>
<dbReference type="InterPro" id="IPR023574">
    <property type="entry name" value="Ribosomal_uL4_dom_sf"/>
</dbReference>
<dbReference type="NCBIfam" id="TIGR03953">
    <property type="entry name" value="rplD_bact"/>
    <property type="match status" value="1"/>
</dbReference>
<dbReference type="PANTHER" id="PTHR10746">
    <property type="entry name" value="50S RIBOSOMAL PROTEIN L4"/>
    <property type="match status" value="1"/>
</dbReference>
<dbReference type="PANTHER" id="PTHR10746:SF6">
    <property type="entry name" value="LARGE RIBOSOMAL SUBUNIT PROTEIN UL4M"/>
    <property type="match status" value="1"/>
</dbReference>
<dbReference type="Pfam" id="PF00573">
    <property type="entry name" value="Ribosomal_L4"/>
    <property type="match status" value="1"/>
</dbReference>
<dbReference type="SUPFAM" id="SSF52166">
    <property type="entry name" value="Ribosomal protein L4"/>
    <property type="match status" value="1"/>
</dbReference>
<keyword id="KW-0687">Ribonucleoprotein</keyword>
<keyword id="KW-0689">Ribosomal protein</keyword>
<keyword id="KW-0694">RNA-binding</keyword>
<keyword id="KW-0699">rRNA-binding</keyword>
<accession>A9R8Z7</accession>
<proteinExistence type="inferred from homology"/>
<protein>
    <recommendedName>
        <fullName evidence="1">Large ribosomal subunit protein uL4</fullName>
    </recommendedName>
    <alternativeName>
        <fullName evidence="3">50S ribosomal protein L4</fullName>
    </alternativeName>
</protein>
<reference key="1">
    <citation type="journal article" date="2010" name="J. Bacteriol.">
        <title>Genome sequence of the deep-rooted Yersinia pestis strain Angola reveals new insights into the evolution and pangenome of the plague bacterium.</title>
        <authorList>
            <person name="Eppinger M."/>
            <person name="Worsham P.L."/>
            <person name="Nikolich M.P."/>
            <person name="Riley D.R."/>
            <person name="Sebastian Y."/>
            <person name="Mou S."/>
            <person name="Achtman M."/>
            <person name="Lindler L.E."/>
            <person name="Ravel J."/>
        </authorList>
    </citation>
    <scope>NUCLEOTIDE SEQUENCE [LARGE SCALE GENOMIC DNA]</scope>
    <source>
        <strain>Angola</strain>
    </source>
</reference>
<sequence>MELVMKDAPGALTVSETTFGRDFNEALVHQVVVAYAAGARQGTRAQKTRAEVTGSGKKPWRQKGTGRARAGSVKSPIWRSGGVTFAAKPQDHSQKVNKKMYRGALKSILSELVRQDRLIIVEKFSVEAPKTKLLAQKLKDMALEDVLIVTGELDENLFLAARNLYKVDVRDVAGIDPVSLIAFDKVVMTADAVKQVEEMLA</sequence>
<comment type="function">
    <text evidence="1">One of the primary rRNA binding proteins, this protein initially binds near the 5'-end of the 23S rRNA. It is important during the early stages of 50S assembly. It makes multiple contacts with different domains of the 23S rRNA in the assembled 50S subunit and ribosome.</text>
</comment>
<comment type="function">
    <text evidence="1">Forms part of the polypeptide exit tunnel.</text>
</comment>
<comment type="subunit">
    <text evidence="1">Part of the 50S ribosomal subunit.</text>
</comment>
<comment type="similarity">
    <text evidence="1">Belongs to the universal ribosomal protein uL4 family.</text>
</comment>
<gene>
    <name evidence="1" type="primary">rplD</name>
    <name type="ordered locus">YpAngola_A0585</name>
</gene>
<evidence type="ECO:0000255" key="1">
    <source>
        <dbReference type="HAMAP-Rule" id="MF_01328"/>
    </source>
</evidence>
<evidence type="ECO:0000256" key="2">
    <source>
        <dbReference type="SAM" id="MobiDB-lite"/>
    </source>
</evidence>
<evidence type="ECO:0000305" key="3"/>
<name>RL4_YERPG</name>